<gene>
    <name evidence="1" type="primary">secF</name>
    <name type="ordered locus">MK1008</name>
</gene>
<reference key="1">
    <citation type="journal article" date="2002" name="Proc. Natl. Acad. Sci. U.S.A.">
        <title>The complete genome of hyperthermophile Methanopyrus kandleri AV19 and monophyly of archaeal methanogens.</title>
        <authorList>
            <person name="Slesarev A.I."/>
            <person name="Mezhevaya K.V."/>
            <person name="Makarova K.S."/>
            <person name="Polushin N.N."/>
            <person name="Shcherbinina O.V."/>
            <person name="Shakhova V.V."/>
            <person name="Belova G.I."/>
            <person name="Aravind L."/>
            <person name="Natale D.A."/>
            <person name="Rogozin I.B."/>
            <person name="Tatusov R.L."/>
            <person name="Wolf Y.I."/>
            <person name="Stetter K.O."/>
            <person name="Malykh A.G."/>
            <person name="Koonin E.V."/>
            <person name="Kozyavkin S.A."/>
        </authorList>
    </citation>
    <scope>NUCLEOTIDE SEQUENCE [LARGE SCALE GENOMIC DNA]</scope>
    <source>
        <strain>AV19 / DSM 6324 / JCM 9639 / NBRC 100938</strain>
    </source>
</reference>
<accession>Q8TWM5</accession>
<feature type="chain" id="PRO_0000412710" description="Protein-export membrane protein SecF">
    <location>
        <begin position="1"/>
        <end position="274"/>
    </location>
</feature>
<feature type="transmembrane region" description="Helical" evidence="1">
    <location>
        <begin position="14"/>
        <end position="34"/>
    </location>
</feature>
<feature type="transmembrane region" description="Helical" evidence="1">
    <location>
        <begin position="121"/>
        <end position="141"/>
    </location>
</feature>
<feature type="transmembrane region" description="Helical" evidence="1">
    <location>
        <begin position="143"/>
        <end position="163"/>
    </location>
</feature>
<feature type="transmembrane region" description="Helical" evidence="1">
    <location>
        <begin position="175"/>
        <end position="197"/>
    </location>
</feature>
<feature type="transmembrane region" description="Helical" evidence="1">
    <location>
        <begin position="217"/>
        <end position="237"/>
    </location>
</feature>
<feature type="transmembrane region" description="Helical" evidence="1">
    <location>
        <begin position="247"/>
        <end position="267"/>
    </location>
</feature>
<organism>
    <name type="scientific">Methanopyrus kandleri (strain AV19 / DSM 6324 / JCM 9639 / NBRC 100938)</name>
    <dbReference type="NCBI Taxonomy" id="190192"/>
    <lineage>
        <taxon>Archaea</taxon>
        <taxon>Methanobacteriati</taxon>
        <taxon>Methanobacteriota</taxon>
        <taxon>Methanomada group</taxon>
        <taxon>Methanopyri</taxon>
        <taxon>Methanopyrales</taxon>
        <taxon>Methanopyraceae</taxon>
        <taxon>Methanopyrus</taxon>
    </lineage>
</organism>
<proteinExistence type="inferred from homology"/>
<sequence length="274" mass="29148">MGLFEKYVSNLNRLLILTMVFAVICAGSTLALGVKKGIDLKGGTMVILKTEKDPDTVTSEASRILGVSDVEAIRSSQGDVIVQVPKYLSADDVNKLARAVGGEVESVQTIGPALGRVFWESVKVAVPLALVAVSIVVFAIFRKPLLSAAVLGALALDLVDALGLMALTGVPLTLASFAGLLMIIGYAVDSNILLSMYTVKRRRVRRVDRAIADSFKTGITMVATTTAAACALFLLSMSEAMFEIAAVVIFGLIADVLNTWIFNAWVIREKIAGR</sequence>
<comment type="function">
    <text evidence="1">Involved in protein export.</text>
</comment>
<comment type="subunit">
    <text evidence="1">Part of the protein translocation apparatus. Forms a complex with SecD.</text>
</comment>
<comment type="subcellular location">
    <subcellularLocation>
        <location evidence="1">Cell membrane</location>
        <topology evidence="1">Multi-pass membrane protein</topology>
    </subcellularLocation>
</comment>
<comment type="similarity">
    <text evidence="1">Belongs to the SecD/SecF family. SecF subfamily.</text>
</comment>
<name>SECF_METKA</name>
<keyword id="KW-1003">Cell membrane</keyword>
<keyword id="KW-0472">Membrane</keyword>
<keyword id="KW-0653">Protein transport</keyword>
<keyword id="KW-1185">Reference proteome</keyword>
<keyword id="KW-0811">Translocation</keyword>
<keyword id="KW-0812">Transmembrane</keyword>
<keyword id="KW-1133">Transmembrane helix</keyword>
<keyword id="KW-0813">Transport</keyword>
<dbReference type="EMBL" id="AE009439">
    <property type="protein sequence ID" value="AAM02221.1"/>
    <property type="molecule type" value="Genomic_DNA"/>
</dbReference>
<dbReference type="RefSeq" id="WP_011019376.1">
    <property type="nucleotide sequence ID" value="NC_003551.1"/>
</dbReference>
<dbReference type="SMR" id="Q8TWM5"/>
<dbReference type="FunCoup" id="Q8TWM5">
    <property type="interactions" value="7"/>
</dbReference>
<dbReference type="STRING" id="190192.MK1008"/>
<dbReference type="PaxDb" id="190192-MK1008"/>
<dbReference type="EnsemblBacteria" id="AAM02221">
    <property type="protein sequence ID" value="AAM02221"/>
    <property type="gene ID" value="MK1008"/>
</dbReference>
<dbReference type="GeneID" id="1477109"/>
<dbReference type="KEGG" id="mka:MK1008"/>
<dbReference type="HOGENOM" id="CLU_060478_0_0_2"/>
<dbReference type="InParanoid" id="Q8TWM5"/>
<dbReference type="OrthoDB" id="85411at2157"/>
<dbReference type="Proteomes" id="UP000001826">
    <property type="component" value="Chromosome"/>
</dbReference>
<dbReference type="GO" id="GO:0005886">
    <property type="term" value="C:plasma membrane"/>
    <property type="evidence" value="ECO:0007669"/>
    <property type="project" value="UniProtKB-SubCell"/>
</dbReference>
<dbReference type="GO" id="GO:0065002">
    <property type="term" value="P:intracellular protein transmembrane transport"/>
    <property type="evidence" value="ECO:0007669"/>
    <property type="project" value="UniProtKB-UniRule"/>
</dbReference>
<dbReference type="GO" id="GO:0006605">
    <property type="term" value="P:protein targeting"/>
    <property type="evidence" value="ECO:0007669"/>
    <property type="project" value="UniProtKB-UniRule"/>
</dbReference>
<dbReference type="Gene3D" id="1.20.1640.10">
    <property type="entry name" value="Multidrug efflux transporter AcrB transmembrane domain"/>
    <property type="match status" value="1"/>
</dbReference>
<dbReference type="HAMAP" id="MF_01464_A">
    <property type="entry name" value="SecF_A"/>
    <property type="match status" value="1"/>
</dbReference>
<dbReference type="InterPro" id="IPR022813">
    <property type="entry name" value="SecD/SecF_arch_bac"/>
</dbReference>
<dbReference type="InterPro" id="IPR022646">
    <property type="entry name" value="SecD/SecF_CS"/>
</dbReference>
<dbReference type="InterPro" id="IPR048634">
    <property type="entry name" value="SecD_SecF_C"/>
</dbReference>
<dbReference type="InterPro" id="IPR024921">
    <property type="entry name" value="SecF_arc"/>
</dbReference>
<dbReference type="PANTHER" id="PTHR30081:SF8">
    <property type="entry name" value="PROTEIN TRANSLOCASE SUBUNIT SECF"/>
    <property type="match status" value="1"/>
</dbReference>
<dbReference type="PANTHER" id="PTHR30081">
    <property type="entry name" value="PROTEIN-EXPORT MEMBRANE PROTEIN SEC"/>
    <property type="match status" value="1"/>
</dbReference>
<dbReference type="Pfam" id="PF07549">
    <property type="entry name" value="Sec_GG"/>
    <property type="match status" value="1"/>
</dbReference>
<dbReference type="Pfam" id="PF02355">
    <property type="entry name" value="SecD_SecF_C"/>
    <property type="match status" value="1"/>
</dbReference>
<dbReference type="SUPFAM" id="SSF82866">
    <property type="entry name" value="Multidrug efflux transporter AcrB transmembrane domain"/>
    <property type="match status" value="1"/>
</dbReference>
<evidence type="ECO:0000255" key="1">
    <source>
        <dbReference type="HAMAP-Rule" id="MF_01464"/>
    </source>
</evidence>
<protein>
    <recommendedName>
        <fullName evidence="1">Protein-export membrane protein SecF</fullName>
    </recommendedName>
</protein>